<protein>
    <recommendedName>
        <fullName>F-actin-capping protein subunit alpha-2</fullName>
    </recommendedName>
    <alternativeName>
        <fullName>CapZ alpha-2</fullName>
    </alternativeName>
</protein>
<keyword id="KW-0007">Acetylation</keyword>
<keyword id="KW-0117">Actin capping</keyword>
<keyword id="KW-0009">Actin-binding</keyword>
<keyword id="KW-0597">Phosphoprotein</keyword>
<organism>
    <name type="scientific">Chlorocebus aethiops</name>
    <name type="common">Green monkey</name>
    <name type="synonym">Cercopithecus aethiops</name>
    <dbReference type="NCBI Taxonomy" id="9534"/>
    <lineage>
        <taxon>Eukaryota</taxon>
        <taxon>Metazoa</taxon>
        <taxon>Chordata</taxon>
        <taxon>Craniata</taxon>
        <taxon>Vertebrata</taxon>
        <taxon>Euteleostomi</taxon>
        <taxon>Mammalia</taxon>
        <taxon>Eutheria</taxon>
        <taxon>Euarchontoglires</taxon>
        <taxon>Primates</taxon>
        <taxon>Haplorrhini</taxon>
        <taxon>Catarrhini</taxon>
        <taxon>Cercopithecidae</taxon>
        <taxon>Cercopithecinae</taxon>
        <taxon>Chlorocebus</taxon>
    </lineage>
</organism>
<proteinExistence type="inferred from homology"/>
<reference key="1">
    <citation type="submission" date="2006-01" db="EMBL/GenBank/DDBJ databases">
        <title>NISC comparative sequencing initiative.</title>
        <authorList>
            <person name="Antonellis A."/>
            <person name="Ayele K."/>
            <person name="Benjamin B."/>
            <person name="Blakesley R.W."/>
            <person name="Boakye A."/>
            <person name="Bouffard G.G."/>
            <person name="Brinkley C."/>
            <person name="Brooks S."/>
            <person name="Chu G."/>
            <person name="Coleman H."/>
            <person name="Engle J."/>
            <person name="Gestole M."/>
            <person name="Greene A."/>
            <person name="Guan X."/>
            <person name="Gupta J."/>
            <person name="Haghighi P."/>
            <person name="Han J."/>
            <person name="Hansen N."/>
            <person name="Ho S.-L."/>
            <person name="Hu P."/>
            <person name="Hunter G."/>
            <person name="Hurle B."/>
            <person name="Idol J.R."/>
            <person name="Kwong P."/>
            <person name="Laric P."/>
            <person name="Larson S."/>
            <person name="Lee-Lin S.-Q."/>
            <person name="Legaspi R."/>
            <person name="Madden M."/>
            <person name="Maduro Q.L."/>
            <person name="Maduro V.B."/>
            <person name="Margulies E.H."/>
            <person name="Masiello C."/>
            <person name="Maskeri B."/>
            <person name="McDowell J."/>
            <person name="Mojidi H.A."/>
            <person name="Mullikin J.C."/>
            <person name="Oestreicher J.S."/>
            <person name="Park M."/>
            <person name="Portnoy M.E."/>
            <person name="Prasad A."/>
            <person name="Puri O."/>
            <person name="Reddix-Dugue N."/>
            <person name="Schandler K."/>
            <person name="Schueler M.G."/>
            <person name="Sison C."/>
            <person name="Stantripop S."/>
            <person name="Stephen E."/>
            <person name="Taye A."/>
            <person name="Thomas J.W."/>
            <person name="Thomas P.J."/>
            <person name="Tsipouri V."/>
            <person name="Ung L."/>
            <person name="Vogt J.L."/>
            <person name="Wetherby K.D."/>
            <person name="Young A."/>
            <person name="Green E.D."/>
        </authorList>
    </citation>
    <scope>NUCLEOTIDE SEQUENCE [LARGE SCALE GENOMIC DNA]</scope>
</reference>
<evidence type="ECO:0000250" key="1"/>
<evidence type="ECO:0000250" key="2">
    <source>
        <dbReference type="UniProtKB" id="P47755"/>
    </source>
</evidence>
<evidence type="ECO:0000305" key="3"/>
<feature type="initiator methionine" description="Removed" evidence="2">
    <location>
        <position position="1"/>
    </location>
</feature>
<feature type="chain" id="PRO_0000260352" description="F-actin-capping protein subunit alpha-2">
    <location>
        <begin position="2"/>
        <end position="286"/>
    </location>
</feature>
<feature type="modified residue" description="N-acetylalanine" evidence="2">
    <location>
        <position position="2"/>
    </location>
</feature>
<feature type="modified residue" description="Phosphoserine" evidence="2">
    <location>
        <position position="9"/>
    </location>
</feature>
<sequence>MADLEEQLSDEEKVRIAAKFIIHAPPGEFNEVFNDVRLLLNNDNLLREGAAHAFAQYNLDQFTPVKIEGYEDQVLITEHGDLGNGKFLDPKNRICFKFDHLRKEATDPRPCEVENAVESWRTSVETALRAYVKEHYPNGVCTVYGKKIDGQQTIIACIESHQFQAKNFWNGRWRSEWKFTITPSTTQVVGILKIQVHYYEDGNVQLVSHKDIQDSLTVSNEVQTAKEFIKIVEAAENEYQTAISENYQTMSDTTFKALRRQLPVTRTKIDWNKILSYKIGKEMQNA</sequence>
<dbReference type="EMBL" id="DP000029">
    <property type="protein sequence ID" value="ABC87486.1"/>
    <property type="molecule type" value="Genomic_DNA"/>
</dbReference>
<dbReference type="SMR" id="Q2IBA7"/>
<dbReference type="GO" id="GO:0030863">
    <property type="term" value="C:cortical cytoskeleton"/>
    <property type="evidence" value="ECO:0007669"/>
    <property type="project" value="TreeGrafter"/>
</dbReference>
<dbReference type="GO" id="GO:0008290">
    <property type="term" value="C:F-actin capping protein complex"/>
    <property type="evidence" value="ECO:0007669"/>
    <property type="project" value="InterPro"/>
</dbReference>
<dbReference type="GO" id="GO:0051015">
    <property type="term" value="F:actin filament binding"/>
    <property type="evidence" value="ECO:0007669"/>
    <property type="project" value="TreeGrafter"/>
</dbReference>
<dbReference type="GO" id="GO:0030036">
    <property type="term" value="P:actin cytoskeleton organization"/>
    <property type="evidence" value="ECO:0007669"/>
    <property type="project" value="TreeGrafter"/>
</dbReference>
<dbReference type="GO" id="GO:0051016">
    <property type="term" value="P:barbed-end actin filament capping"/>
    <property type="evidence" value="ECO:0007669"/>
    <property type="project" value="InterPro"/>
</dbReference>
<dbReference type="FunFam" id="3.30.1140.60:FF:000001">
    <property type="entry name" value="F-actin-capping protein subunit alpha"/>
    <property type="match status" value="1"/>
</dbReference>
<dbReference type="FunFam" id="3.90.1150.210:FF:000002">
    <property type="entry name" value="F-actin-capping protein subunit alpha"/>
    <property type="match status" value="1"/>
</dbReference>
<dbReference type="Gene3D" id="3.30.1140.60">
    <property type="entry name" value="F-actin capping protein, alpha subunit"/>
    <property type="match status" value="1"/>
</dbReference>
<dbReference type="Gene3D" id="3.90.1150.210">
    <property type="entry name" value="F-actin capping protein, beta subunit"/>
    <property type="match status" value="1"/>
</dbReference>
<dbReference type="InterPro" id="IPR002189">
    <property type="entry name" value="CapZ_alpha"/>
</dbReference>
<dbReference type="InterPro" id="IPR037282">
    <property type="entry name" value="CapZ_alpha/beta"/>
</dbReference>
<dbReference type="InterPro" id="IPR042276">
    <property type="entry name" value="CapZ_alpha/beta_2"/>
</dbReference>
<dbReference type="InterPro" id="IPR042489">
    <property type="entry name" value="CapZ_alpha_1"/>
</dbReference>
<dbReference type="InterPro" id="IPR017865">
    <property type="entry name" value="F-actin_cap_asu_CS"/>
</dbReference>
<dbReference type="PANTHER" id="PTHR10653">
    <property type="entry name" value="F-ACTIN-CAPPING PROTEIN SUBUNIT ALPHA"/>
    <property type="match status" value="1"/>
</dbReference>
<dbReference type="PANTHER" id="PTHR10653:SF2">
    <property type="entry name" value="F-ACTIN-CAPPING PROTEIN SUBUNIT ALPHA-2"/>
    <property type="match status" value="1"/>
</dbReference>
<dbReference type="Pfam" id="PF01267">
    <property type="entry name" value="F-actin_cap_A"/>
    <property type="match status" value="1"/>
</dbReference>
<dbReference type="PRINTS" id="PR00191">
    <property type="entry name" value="FACTINCAPA"/>
</dbReference>
<dbReference type="SUPFAM" id="SSF90096">
    <property type="entry name" value="Subunits of heterodimeric actin filament capping protein Capz"/>
    <property type="match status" value="1"/>
</dbReference>
<dbReference type="PROSITE" id="PS00748">
    <property type="entry name" value="F_ACTIN_CAPPING_A_1"/>
    <property type="match status" value="1"/>
</dbReference>
<dbReference type="PROSITE" id="PS00749">
    <property type="entry name" value="F_ACTIN_CAPPING_A_2"/>
    <property type="match status" value="1"/>
</dbReference>
<name>CAZA2_CHLAE</name>
<gene>
    <name type="primary">CAPZA2</name>
</gene>
<accession>Q2IBA7</accession>
<comment type="function">
    <text evidence="1">F-actin-capping proteins bind in a Ca(2+)-independent manner to the fast growing ends of actin filaments (barbed end) thereby blocking the exchange of subunits at these ends. Unlike other capping proteins (such as gelsolin and severin), these proteins do not sever actin filaments (By similarity).</text>
</comment>
<comment type="subunit">
    <text evidence="1 2">Component of the F-actin capping complex, composed of a heterodimer of an alpha and a beta subunit. Component of the WASH complex, composed of F-actin-capping protein subunit alpha (CAPZA1, CAPZA2 or CAPZA3), F-actin-capping protein subunit beta (CAPZB), WASHC1, WASHC2, WASHC3, WASHC4 and WASHC5. Interacts with RCSD1/CAPZIP (By similarity). Directly interacts with CRACD; this interaction decreases binding to actin (By similarity).</text>
</comment>
<comment type="similarity">
    <text evidence="3">Belongs to the F-actin-capping protein alpha subunit family.</text>
</comment>